<feature type="chain" id="PRO_1000116933" description="4-diphosphocytidyl-2-C-methyl-D-erythritol kinase">
    <location>
        <begin position="1"/>
        <end position="282"/>
    </location>
</feature>
<feature type="active site" evidence="1">
    <location>
        <position position="12"/>
    </location>
</feature>
<feature type="active site" evidence="1">
    <location>
        <position position="137"/>
    </location>
</feature>
<feature type="binding site" evidence="1">
    <location>
        <begin position="95"/>
        <end position="105"/>
    </location>
    <ligand>
        <name>ATP</name>
        <dbReference type="ChEBI" id="CHEBI:30616"/>
    </ligand>
</feature>
<organism>
    <name type="scientific">Pseudomonas aeruginosa (strain LESB58)</name>
    <dbReference type="NCBI Taxonomy" id="557722"/>
    <lineage>
        <taxon>Bacteria</taxon>
        <taxon>Pseudomonadati</taxon>
        <taxon>Pseudomonadota</taxon>
        <taxon>Gammaproteobacteria</taxon>
        <taxon>Pseudomonadales</taxon>
        <taxon>Pseudomonadaceae</taxon>
        <taxon>Pseudomonas</taxon>
    </lineage>
</organism>
<accession>B7V0L5</accession>
<protein>
    <recommendedName>
        <fullName evidence="1">4-diphosphocytidyl-2-C-methyl-D-erythritol kinase</fullName>
        <shortName evidence="1">CMK</shortName>
        <ecNumber evidence="1">2.7.1.148</ecNumber>
    </recommendedName>
    <alternativeName>
        <fullName evidence="1">4-(cytidine-5'-diphospho)-2-C-methyl-D-erythritol kinase</fullName>
    </alternativeName>
</protein>
<dbReference type="EC" id="2.7.1.148" evidence="1"/>
<dbReference type="EMBL" id="FM209186">
    <property type="protein sequence ID" value="CAW29809.1"/>
    <property type="molecule type" value="Genomic_DNA"/>
</dbReference>
<dbReference type="RefSeq" id="WP_003123430.1">
    <property type="nucleotide sequence ID" value="NC_011770.1"/>
</dbReference>
<dbReference type="SMR" id="B7V0L5"/>
<dbReference type="KEGG" id="pag:PLES_50551"/>
<dbReference type="HOGENOM" id="CLU_053057_3_0_6"/>
<dbReference type="UniPathway" id="UPA00056">
    <property type="reaction ID" value="UER00094"/>
</dbReference>
<dbReference type="GO" id="GO:0050515">
    <property type="term" value="F:4-(cytidine 5'-diphospho)-2-C-methyl-D-erythritol kinase activity"/>
    <property type="evidence" value="ECO:0007669"/>
    <property type="project" value="UniProtKB-UniRule"/>
</dbReference>
<dbReference type="GO" id="GO:0005524">
    <property type="term" value="F:ATP binding"/>
    <property type="evidence" value="ECO:0007669"/>
    <property type="project" value="UniProtKB-UniRule"/>
</dbReference>
<dbReference type="GO" id="GO:0019288">
    <property type="term" value="P:isopentenyl diphosphate biosynthetic process, methylerythritol 4-phosphate pathway"/>
    <property type="evidence" value="ECO:0007669"/>
    <property type="project" value="UniProtKB-UniRule"/>
</dbReference>
<dbReference type="GO" id="GO:0016114">
    <property type="term" value="P:terpenoid biosynthetic process"/>
    <property type="evidence" value="ECO:0007669"/>
    <property type="project" value="InterPro"/>
</dbReference>
<dbReference type="FunFam" id="3.30.230.10:FF:000022">
    <property type="entry name" value="4-diphosphocytidyl-2-C-methyl-D-erythritol kinase"/>
    <property type="match status" value="1"/>
</dbReference>
<dbReference type="Gene3D" id="3.30.230.10">
    <property type="match status" value="1"/>
</dbReference>
<dbReference type="Gene3D" id="3.30.70.890">
    <property type="entry name" value="GHMP kinase, C-terminal domain"/>
    <property type="match status" value="1"/>
</dbReference>
<dbReference type="HAMAP" id="MF_00061">
    <property type="entry name" value="IspE"/>
    <property type="match status" value="1"/>
</dbReference>
<dbReference type="InterPro" id="IPR013750">
    <property type="entry name" value="GHMP_kinase_C_dom"/>
</dbReference>
<dbReference type="InterPro" id="IPR036554">
    <property type="entry name" value="GHMP_kinase_C_sf"/>
</dbReference>
<dbReference type="InterPro" id="IPR006204">
    <property type="entry name" value="GHMP_kinase_N_dom"/>
</dbReference>
<dbReference type="InterPro" id="IPR004424">
    <property type="entry name" value="IspE"/>
</dbReference>
<dbReference type="InterPro" id="IPR020568">
    <property type="entry name" value="Ribosomal_Su5_D2-typ_SF"/>
</dbReference>
<dbReference type="InterPro" id="IPR014721">
    <property type="entry name" value="Ribsml_uS5_D2-typ_fold_subgr"/>
</dbReference>
<dbReference type="NCBIfam" id="TIGR00154">
    <property type="entry name" value="ispE"/>
    <property type="match status" value="1"/>
</dbReference>
<dbReference type="PANTHER" id="PTHR43527">
    <property type="entry name" value="4-DIPHOSPHOCYTIDYL-2-C-METHYL-D-ERYTHRITOL KINASE, CHLOROPLASTIC"/>
    <property type="match status" value="1"/>
</dbReference>
<dbReference type="PANTHER" id="PTHR43527:SF2">
    <property type="entry name" value="4-DIPHOSPHOCYTIDYL-2-C-METHYL-D-ERYTHRITOL KINASE, CHLOROPLASTIC"/>
    <property type="match status" value="1"/>
</dbReference>
<dbReference type="Pfam" id="PF08544">
    <property type="entry name" value="GHMP_kinases_C"/>
    <property type="match status" value="1"/>
</dbReference>
<dbReference type="Pfam" id="PF00288">
    <property type="entry name" value="GHMP_kinases_N"/>
    <property type="match status" value="1"/>
</dbReference>
<dbReference type="PIRSF" id="PIRSF010376">
    <property type="entry name" value="IspE"/>
    <property type="match status" value="1"/>
</dbReference>
<dbReference type="SUPFAM" id="SSF55060">
    <property type="entry name" value="GHMP Kinase, C-terminal domain"/>
    <property type="match status" value="1"/>
</dbReference>
<dbReference type="SUPFAM" id="SSF54211">
    <property type="entry name" value="Ribosomal protein S5 domain 2-like"/>
    <property type="match status" value="1"/>
</dbReference>
<sequence>MSVRLSLPAPAKLNLFLHILGRRDDGYHELQTLFQFLDHGDELHFEARQDGQVRLHTEIAGVPHDSNLIVRAARGLQEASGSPQGVDIWLDKRLPMGGGIGGGSSDAATTLLALNHLWQLGWDEDRIAALGLRLGADVPVFTRGRAAFAEGVGEKLTPVDIPEPWYLVVVPQVLVSTAEIFSDPLLTRDSPAIKVRTVLEGDSRNDCQPVVERRYPEVRNALILLNKFVSARLTGTGGCVFGSFPNKAEADKVSALLPDHLQRFVAKGSNVSMLHRKLETLV</sequence>
<evidence type="ECO:0000255" key="1">
    <source>
        <dbReference type="HAMAP-Rule" id="MF_00061"/>
    </source>
</evidence>
<reference key="1">
    <citation type="journal article" date="2009" name="Genome Res.">
        <title>Newly introduced genomic prophage islands are critical determinants of in vivo competitiveness in the Liverpool epidemic strain of Pseudomonas aeruginosa.</title>
        <authorList>
            <person name="Winstanley C."/>
            <person name="Langille M.G.I."/>
            <person name="Fothergill J.L."/>
            <person name="Kukavica-Ibrulj I."/>
            <person name="Paradis-Bleau C."/>
            <person name="Sanschagrin F."/>
            <person name="Thomson N.R."/>
            <person name="Winsor G.L."/>
            <person name="Quail M.A."/>
            <person name="Lennard N."/>
            <person name="Bignell A."/>
            <person name="Clarke L."/>
            <person name="Seeger K."/>
            <person name="Saunders D."/>
            <person name="Harris D."/>
            <person name="Parkhill J."/>
            <person name="Hancock R.E.W."/>
            <person name="Brinkman F.S.L."/>
            <person name="Levesque R.C."/>
        </authorList>
    </citation>
    <scope>NUCLEOTIDE SEQUENCE [LARGE SCALE GENOMIC DNA]</scope>
    <source>
        <strain>LESB58</strain>
    </source>
</reference>
<comment type="function">
    <text evidence="1">Catalyzes the phosphorylation of the position 2 hydroxy group of 4-diphosphocytidyl-2C-methyl-D-erythritol.</text>
</comment>
<comment type="catalytic activity">
    <reaction evidence="1">
        <text>4-CDP-2-C-methyl-D-erythritol + ATP = 4-CDP-2-C-methyl-D-erythritol 2-phosphate + ADP + H(+)</text>
        <dbReference type="Rhea" id="RHEA:18437"/>
        <dbReference type="ChEBI" id="CHEBI:15378"/>
        <dbReference type="ChEBI" id="CHEBI:30616"/>
        <dbReference type="ChEBI" id="CHEBI:57823"/>
        <dbReference type="ChEBI" id="CHEBI:57919"/>
        <dbReference type="ChEBI" id="CHEBI:456216"/>
        <dbReference type="EC" id="2.7.1.148"/>
    </reaction>
</comment>
<comment type="pathway">
    <text evidence="1">Isoprenoid biosynthesis; isopentenyl diphosphate biosynthesis via DXP pathway; isopentenyl diphosphate from 1-deoxy-D-xylulose 5-phosphate: step 3/6.</text>
</comment>
<comment type="similarity">
    <text evidence="1">Belongs to the GHMP kinase family. IspE subfamily.</text>
</comment>
<keyword id="KW-0067">ATP-binding</keyword>
<keyword id="KW-0414">Isoprene biosynthesis</keyword>
<keyword id="KW-0418">Kinase</keyword>
<keyword id="KW-0547">Nucleotide-binding</keyword>
<keyword id="KW-0808">Transferase</keyword>
<gene>
    <name evidence="1" type="primary">ispE</name>
    <name type="ordered locus">PLES_50551</name>
</gene>
<name>ISPE_PSEA8</name>
<proteinExistence type="inferred from homology"/>